<dbReference type="PIR" id="A02771">
    <property type="entry name" value="R7MCML"/>
</dbReference>
<dbReference type="SMR" id="P02395"/>
<dbReference type="iPTMnet" id="P02395"/>
<dbReference type="GO" id="GO:0022625">
    <property type="term" value="C:cytosolic large ribosomal subunit"/>
    <property type="evidence" value="ECO:0007669"/>
    <property type="project" value="TreeGrafter"/>
</dbReference>
<dbReference type="GO" id="GO:0003729">
    <property type="term" value="F:mRNA binding"/>
    <property type="evidence" value="ECO:0007669"/>
    <property type="project" value="TreeGrafter"/>
</dbReference>
<dbReference type="GO" id="GO:0003735">
    <property type="term" value="F:structural constituent of ribosome"/>
    <property type="evidence" value="ECO:0007669"/>
    <property type="project" value="InterPro"/>
</dbReference>
<dbReference type="GO" id="GO:0006412">
    <property type="term" value="P:translation"/>
    <property type="evidence" value="ECO:0007669"/>
    <property type="project" value="UniProtKB-UniRule"/>
</dbReference>
<dbReference type="CDD" id="cd00387">
    <property type="entry name" value="Ribosomal_L7_L12"/>
    <property type="match status" value="1"/>
</dbReference>
<dbReference type="FunFam" id="3.30.1390.10:FF:000001">
    <property type="entry name" value="50S ribosomal protein L7/L12"/>
    <property type="match status" value="1"/>
</dbReference>
<dbReference type="Gene3D" id="3.30.1390.10">
    <property type="match status" value="1"/>
</dbReference>
<dbReference type="Gene3D" id="1.20.5.710">
    <property type="entry name" value="Single helix bin"/>
    <property type="match status" value="1"/>
</dbReference>
<dbReference type="HAMAP" id="MF_00368">
    <property type="entry name" value="Ribosomal_bL12"/>
    <property type="match status" value="1"/>
</dbReference>
<dbReference type="InterPro" id="IPR000206">
    <property type="entry name" value="Ribosomal_bL12"/>
</dbReference>
<dbReference type="InterPro" id="IPR013823">
    <property type="entry name" value="Ribosomal_bL12_C"/>
</dbReference>
<dbReference type="InterPro" id="IPR014719">
    <property type="entry name" value="Ribosomal_bL12_C/ClpS-like"/>
</dbReference>
<dbReference type="InterPro" id="IPR008932">
    <property type="entry name" value="Ribosomal_bL12_oligo"/>
</dbReference>
<dbReference type="InterPro" id="IPR036235">
    <property type="entry name" value="Ribosomal_bL12_oligo_N_sf"/>
</dbReference>
<dbReference type="NCBIfam" id="TIGR00855">
    <property type="entry name" value="L12"/>
    <property type="match status" value="1"/>
</dbReference>
<dbReference type="PANTHER" id="PTHR45987">
    <property type="entry name" value="39S RIBOSOMAL PROTEIN L12"/>
    <property type="match status" value="1"/>
</dbReference>
<dbReference type="PANTHER" id="PTHR45987:SF4">
    <property type="entry name" value="LARGE RIBOSOMAL SUBUNIT PROTEIN BL12M"/>
    <property type="match status" value="1"/>
</dbReference>
<dbReference type="Pfam" id="PF00542">
    <property type="entry name" value="Ribosomal_L12"/>
    <property type="match status" value="1"/>
</dbReference>
<dbReference type="Pfam" id="PF16320">
    <property type="entry name" value="Ribosomal_L12_N"/>
    <property type="match status" value="1"/>
</dbReference>
<dbReference type="SUPFAM" id="SSF54736">
    <property type="entry name" value="ClpS-like"/>
    <property type="match status" value="1"/>
</dbReference>
<dbReference type="SUPFAM" id="SSF48300">
    <property type="entry name" value="Ribosomal protein L7/12, oligomerisation (N-terminal) domain"/>
    <property type="match status" value="1"/>
</dbReference>
<name>RL7_MICLU</name>
<protein>
    <recommendedName>
        <fullName evidence="1">Large ribosomal subunit protein bL12</fullName>
    </recommendedName>
    <alternativeName>
        <fullName evidence="3">50S ribosomal protein L7/L12</fullName>
    </alternativeName>
    <alternativeName>
        <fullName>MA1/MA2</fullName>
    </alternativeName>
</protein>
<reference key="1">
    <citation type="journal article" date="1981" name="FEBS Lett.">
        <title>Primary structure of an acidic ribosomal protein from Micrococcus lysodeikticus.</title>
        <authorList>
            <person name="Itoh T."/>
        </authorList>
    </citation>
    <scope>PROTEIN SEQUENCE</scope>
    <scope>ACETYLATION AT MET-1</scope>
</reference>
<sequence length="118" mass="12372">MNKEQILEAIKAMTVLELNDLVKAIEEEFGVTAAAPVVAGGAAAAAEEKTEFDVVLASAGAEKIKVIKVVREITGLGLKEAKEVVDNAPKALKEGVSKDEAEEIKAKLEEVGASVEVK</sequence>
<gene>
    <name evidence="1" type="primary">rplL</name>
</gene>
<evidence type="ECO:0000255" key="1">
    <source>
        <dbReference type="HAMAP-Rule" id="MF_00368"/>
    </source>
</evidence>
<evidence type="ECO:0000269" key="2">
    <source>
    </source>
</evidence>
<evidence type="ECO:0000305" key="3"/>
<accession>P02395</accession>
<keyword id="KW-0007">Acetylation</keyword>
<keyword id="KW-0903">Direct protein sequencing</keyword>
<keyword id="KW-0687">Ribonucleoprotein</keyword>
<keyword id="KW-0689">Ribosomal protein</keyword>
<proteinExistence type="evidence at protein level"/>
<organism>
    <name type="scientific">Micrococcus luteus</name>
    <name type="common">Micrococcus lysodeikticus</name>
    <dbReference type="NCBI Taxonomy" id="1270"/>
    <lineage>
        <taxon>Bacteria</taxon>
        <taxon>Bacillati</taxon>
        <taxon>Actinomycetota</taxon>
        <taxon>Actinomycetes</taxon>
        <taxon>Micrococcales</taxon>
        <taxon>Micrococcaceae</taxon>
        <taxon>Micrococcus</taxon>
    </lineage>
</organism>
<feature type="chain" id="PRO_0000157548" description="Large ribosomal subunit protein bL12">
    <location>
        <begin position="1"/>
        <end position="118"/>
    </location>
</feature>
<feature type="modified residue" description="N-acetylmethionine; in form MA2" evidence="2">
    <location>
        <position position="1"/>
    </location>
</feature>
<comment type="function">
    <text evidence="1">Forms part of the ribosomal stalk which helps the ribosome interact with GTP-bound translation factors. Is thus essential for accurate translation.</text>
</comment>
<comment type="subunit">
    <text evidence="1">Homodimer. Part of the ribosomal stalk of the 50S ribosomal subunit. Forms a multimeric L10(L12)X complex, where L10 forms an elongated spine to which 2 to 4 L12 dimers bind in a sequential fashion. Binds GTP-bound translation factors.</text>
</comment>
<comment type="PTM">
    <text evidence="2">Acetylation of Met-1 converts MA1 to MA2.</text>
</comment>
<comment type="similarity">
    <text evidence="1">Belongs to the bacterial ribosomal protein bL12 family.</text>
</comment>